<comment type="function">
    <text evidence="1">Catalyzes the NAD(+)-dependent oxidation of L-threonine to 2-amino-3-ketobutyrate.</text>
</comment>
<comment type="catalytic activity">
    <reaction evidence="1">
        <text>L-threonine + NAD(+) = (2S)-2-amino-3-oxobutanoate + NADH + H(+)</text>
        <dbReference type="Rhea" id="RHEA:13161"/>
        <dbReference type="ChEBI" id="CHEBI:15378"/>
        <dbReference type="ChEBI" id="CHEBI:57540"/>
        <dbReference type="ChEBI" id="CHEBI:57926"/>
        <dbReference type="ChEBI" id="CHEBI:57945"/>
        <dbReference type="ChEBI" id="CHEBI:78948"/>
        <dbReference type="EC" id="1.1.1.103"/>
    </reaction>
</comment>
<comment type="cofactor">
    <cofactor evidence="1">
        <name>Zn(2+)</name>
        <dbReference type="ChEBI" id="CHEBI:29105"/>
    </cofactor>
    <text evidence="1">Binds 2 Zn(2+) ions per subunit.</text>
</comment>
<comment type="pathway">
    <text evidence="1">Amino-acid degradation; L-threonine degradation via oxydo-reductase pathway; glycine from L-threonine: step 1/2.</text>
</comment>
<comment type="subunit">
    <text evidence="1">Homotetramer.</text>
</comment>
<comment type="subcellular location">
    <subcellularLocation>
        <location evidence="1">Cytoplasm</location>
    </subcellularLocation>
</comment>
<comment type="similarity">
    <text evidence="1">Belongs to the zinc-containing alcohol dehydrogenase family.</text>
</comment>
<reference key="1">
    <citation type="submission" date="2007-06" db="EMBL/GenBank/DDBJ databases">
        <title>Complete sequence of Sinorhizobium medicae WSM419 chromosome.</title>
        <authorList>
            <consortium name="US DOE Joint Genome Institute"/>
            <person name="Copeland A."/>
            <person name="Lucas S."/>
            <person name="Lapidus A."/>
            <person name="Barry K."/>
            <person name="Glavina del Rio T."/>
            <person name="Dalin E."/>
            <person name="Tice H."/>
            <person name="Pitluck S."/>
            <person name="Chain P."/>
            <person name="Malfatti S."/>
            <person name="Shin M."/>
            <person name="Vergez L."/>
            <person name="Schmutz J."/>
            <person name="Larimer F."/>
            <person name="Land M."/>
            <person name="Hauser L."/>
            <person name="Kyrpides N."/>
            <person name="Mikhailova N."/>
            <person name="Reeve W.G."/>
            <person name="Richardson P."/>
        </authorList>
    </citation>
    <scope>NUCLEOTIDE SEQUENCE [LARGE SCALE GENOMIC DNA]</scope>
    <source>
        <strain>WSM419</strain>
    </source>
</reference>
<sequence>MTNMMRALVKTRPEVGLWMERVPVPEVGPNDVLIRVRKSAICGTDVHIWNWDQWAQKTIPVPMVVGHEFMGEIVEVGPAVTKHHVGERVSGEGHIVCGKCRNCRAGRGHLCRNTLGVGVNRPGSFAEFVCLPEYNVVSIPDDVPDEIAAIFDPFGNAVHTALSFDLVGEDVLVTGAGPIGIMGALVAKRCGARKVVITDINPVRLDLARKVGIDYVVDASKENLADVMRVIGMTEGFDVGLEMSGAAPAFRDMIDKMNNGGKIAILGIAPAGFEIDWNKVIFKMLNLKGIYGREMFETWYKMIAFVQGGLDLSQIITHRIGIDEFGDGFEAMRSGNSGKVVMDW</sequence>
<name>TDH_SINMW</name>
<organism>
    <name type="scientific">Sinorhizobium medicae (strain WSM419)</name>
    <name type="common">Ensifer medicae</name>
    <dbReference type="NCBI Taxonomy" id="366394"/>
    <lineage>
        <taxon>Bacteria</taxon>
        <taxon>Pseudomonadati</taxon>
        <taxon>Pseudomonadota</taxon>
        <taxon>Alphaproteobacteria</taxon>
        <taxon>Hyphomicrobiales</taxon>
        <taxon>Rhizobiaceae</taxon>
        <taxon>Sinorhizobium/Ensifer group</taxon>
        <taxon>Sinorhizobium</taxon>
    </lineage>
</organism>
<accession>A6UBM6</accession>
<proteinExistence type="inferred from homology"/>
<dbReference type="EC" id="1.1.1.103" evidence="1"/>
<dbReference type="EMBL" id="CP000738">
    <property type="protein sequence ID" value="ABR61056.1"/>
    <property type="molecule type" value="Genomic_DNA"/>
</dbReference>
<dbReference type="RefSeq" id="WP_011976353.1">
    <property type="nucleotide sequence ID" value="NC_009636.1"/>
</dbReference>
<dbReference type="RefSeq" id="YP_001327891.1">
    <property type="nucleotide sequence ID" value="NC_009636.1"/>
</dbReference>
<dbReference type="SMR" id="A6UBM6"/>
<dbReference type="STRING" id="366394.Smed_2224"/>
<dbReference type="GeneID" id="61611536"/>
<dbReference type="KEGG" id="smd:Smed_2224"/>
<dbReference type="PATRIC" id="fig|366394.8.peg.5392"/>
<dbReference type="eggNOG" id="COG1063">
    <property type="taxonomic scope" value="Bacteria"/>
</dbReference>
<dbReference type="HOGENOM" id="CLU_026673_11_0_5"/>
<dbReference type="OrthoDB" id="9773078at2"/>
<dbReference type="UniPathway" id="UPA00046">
    <property type="reaction ID" value="UER00505"/>
</dbReference>
<dbReference type="Proteomes" id="UP000001108">
    <property type="component" value="Chromosome"/>
</dbReference>
<dbReference type="GO" id="GO:0005737">
    <property type="term" value="C:cytoplasm"/>
    <property type="evidence" value="ECO:0007669"/>
    <property type="project" value="UniProtKB-SubCell"/>
</dbReference>
<dbReference type="GO" id="GO:0008743">
    <property type="term" value="F:L-threonine 3-dehydrogenase activity"/>
    <property type="evidence" value="ECO:0007669"/>
    <property type="project" value="UniProtKB-UniRule"/>
</dbReference>
<dbReference type="GO" id="GO:0008270">
    <property type="term" value="F:zinc ion binding"/>
    <property type="evidence" value="ECO:0007669"/>
    <property type="project" value="UniProtKB-UniRule"/>
</dbReference>
<dbReference type="GO" id="GO:0019518">
    <property type="term" value="P:L-threonine catabolic process to glycine"/>
    <property type="evidence" value="ECO:0007669"/>
    <property type="project" value="UniProtKB-UniPathway"/>
</dbReference>
<dbReference type="Gene3D" id="3.90.180.10">
    <property type="entry name" value="Medium-chain alcohol dehydrogenases, catalytic domain"/>
    <property type="match status" value="1"/>
</dbReference>
<dbReference type="Gene3D" id="3.40.50.720">
    <property type="entry name" value="NAD(P)-binding Rossmann-like Domain"/>
    <property type="match status" value="1"/>
</dbReference>
<dbReference type="HAMAP" id="MF_00627">
    <property type="entry name" value="Thr_dehydrog"/>
    <property type="match status" value="1"/>
</dbReference>
<dbReference type="InterPro" id="IPR013149">
    <property type="entry name" value="ADH-like_C"/>
</dbReference>
<dbReference type="InterPro" id="IPR013154">
    <property type="entry name" value="ADH-like_N"/>
</dbReference>
<dbReference type="InterPro" id="IPR002328">
    <property type="entry name" value="ADH_Zn_CS"/>
</dbReference>
<dbReference type="InterPro" id="IPR011032">
    <property type="entry name" value="GroES-like_sf"/>
</dbReference>
<dbReference type="InterPro" id="IPR004627">
    <property type="entry name" value="L-Threonine_3-DHase"/>
</dbReference>
<dbReference type="InterPro" id="IPR036291">
    <property type="entry name" value="NAD(P)-bd_dom_sf"/>
</dbReference>
<dbReference type="InterPro" id="IPR050129">
    <property type="entry name" value="Zn_alcohol_dh"/>
</dbReference>
<dbReference type="NCBIfam" id="NF003808">
    <property type="entry name" value="PRK05396.1"/>
    <property type="match status" value="1"/>
</dbReference>
<dbReference type="NCBIfam" id="TIGR00692">
    <property type="entry name" value="tdh"/>
    <property type="match status" value="1"/>
</dbReference>
<dbReference type="PANTHER" id="PTHR43401">
    <property type="entry name" value="L-THREONINE 3-DEHYDROGENASE"/>
    <property type="match status" value="1"/>
</dbReference>
<dbReference type="PANTHER" id="PTHR43401:SF2">
    <property type="entry name" value="L-THREONINE 3-DEHYDROGENASE"/>
    <property type="match status" value="1"/>
</dbReference>
<dbReference type="Pfam" id="PF08240">
    <property type="entry name" value="ADH_N"/>
    <property type="match status" value="1"/>
</dbReference>
<dbReference type="Pfam" id="PF00107">
    <property type="entry name" value="ADH_zinc_N"/>
    <property type="match status" value="1"/>
</dbReference>
<dbReference type="SUPFAM" id="SSF50129">
    <property type="entry name" value="GroES-like"/>
    <property type="match status" value="1"/>
</dbReference>
<dbReference type="SUPFAM" id="SSF51735">
    <property type="entry name" value="NAD(P)-binding Rossmann-fold domains"/>
    <property type="match status" value="1"/>
</dbReference>
<dbReference type="PROSITE" id="PS00059">
    <property type="entry name" value="ADH_ZINC"/>
    <property type="match status" value="1"/>
</dbReference>
<protein>
    <recommendedName>
        <fullName evidence="1">L-threonine 3-dehydrogenase</fullName>
        <shortName evidence="1">TDH</shortName>
        <ecNumber evidence="1">1.1.1.103</ecNumber>
    </recommendedName>
</protein>
<gene>
    <name evidence="1" type="primary">tdh</name>
    <name type="ordered locus">Smed_2224</name>
</gene>
<evidence type="ECO:0000255" key="1">
    <source>
        <dbReference type="HAMAP-Rule" id="MF_00627"/>
    </source>
</evidence>
<keyword id="KW-0963">Cytoplasm</keyword>
<keyword id="KW-0479">Metal-binding</keyword>
<keyword id="KW-0520">NAD</keyword>
<keyword id="KW-0560">Oxidoreductase</keyword>
<keyword id="KW-0862">Zinc</keyword>
<feature type="chain" id="PRO_1000051665" description="L-threonine 3-dehydrogenase">
    <location>
        <begin position="1"/>
        <end position="344"/>
    </location>
</feature>
<feature type="active site" description="Charge relay system" evidence="1">
    <location>
        <position position="44"/>
    </location>
</feature>
<feature type="active site" description="Charge relay system" evidence="1">
    <location>
        <position position="47"/>
    </location>
</feature>
<feature type="binding site" evidence="1">
    <location>
        <position position="42"/>
    </location>
    <ligand>
        <name>Zn(2+)</name>
        <dbReference type="ChEBI" id="CHEBI:29105"/>
        <label>1</label>
        <note>catalytic</note>
    </ligand>
</feature>
<feature type="binding site" evidence="1">
    <location>
        <position position="67"/>
    </location>
    <ligand>
        <name>Zn(2+)</name>
        <dbReference type="ChEBI" id="CHEBI:29105"/>
        <label>1</label>
        <note>catalytic</note>
    </ligand>
</feature>
<feature type="binding site" evidence="1">
    <location>
        <position position="68"/>
    </location>
    <ligand>
        <name>Zn(2+)</name>
        <dbReference type="ChEBI" id="CHEBI:29105"/>
        <label>1</label>
        <note>catalytic</note>
    </ligand>
</feature>
<feature type="binding site" evidence="1">
    <location>
        <position position="97"/>
    </location>
    <ligand>
        <name>Zn(2+)</name>
        <dbReference type="ChEBI" id="CHEBI:29105"/>
        <label>2</label>
    </ligand>
</feature>
<feature type="binding site" evidence="1">
    <location>
        <position position="100"/>
    </location>
    <ligand>
        <name>Zn(2+)</name>
        <dbReference type="ChEBI" id="CHEBI:29105"/>
        <label>2</label>
    </ligand>
</feature>
<feature type="binding site" evidence="1">
    <location>
        <position position="103"/>
    </location>
    <ligand>
        <name>Zn(2+)</name>
        <dbReference type="ChEBI" id="CHEBI:29105"/>
        <label>2</label>
    </ligand>
</feature>
<feature type="binding site" evidence="1">
    <location>
        <position position="111"/>
    </location>
    <ligand>
        <name>Zn(2+)</name>
        <dbReference type="ChEBI" id="CHEBI:29105"/>
        <label>2</label>
    </ligand>
</feature>
<feature type="binding site" evidence="1">
    <location>
        <position position="179"/>
    </location>
    <ligand>
        <name>NAD(+)</name>
        <dbReference type="ChEBI" id="CHEBI:57540"/>
    </ligand>
</feature>
<feature type="binding site" evidence="1">
    <location>
        <position position="199"/>
    </location>
    <ligand>
        <name>NAD(+)</name>
        <dbReference type="ChEBI" id="CHEBI:57540"/>
    </ligand>
</feature>
<feature type="binding site" evidence="1">
    <location>
        <position position="204"/>
    </location>
    <ligand>
        <name>NAD(+)</name>
        <dbReference type="ChEBI" id="CHEBI:57540"/>
    </ligand>
</feature>
<feature type="binding site" evidence="1">
    <location>
        <begin position="266"/>
        <end position="268"/>
    </location>
    <ligand>
        <name>NAD(+)</name>
        <dbReference type="ChEBI" id="CHEBI:57540"/>
    </ligand>
</feature>
<feature type="binding site" evidence="1">
    <location>
        <begin position="290"/>
        <end position="291"/>
    </location>
    <ligand>
        <name>NAD(+)</name>
        <dbReference type="ChEBI" id="CHEBI:57540"/>
    </ligand>
</feature>
<feature type="site" description="Important for catalytic activity for the proton relay mechanism but does not participate directly in the coordination of zinc atom" evidence="1">
    <location>
        <position position="152"/>
    </location>
</feature>